<accession>Q7WFS8</accession>
<feature type="chain" id="PRO_0000253647" description="UDP-3-O-acyl-N-acetylglucosamine deacetylase">
    <location>
        <begin position="1"/>
        <end position="307"/>
    </location>
</feature>
<feature type="active site" description="Proton donor" evidence="1">
    <location>
        <position position="268"/>
    </location>
</feature>
<feature type="binding site" evidence="1">
    <location>
        <position position="78"/>
    </location>
    <ligand>
        <name>Zn(2+)</name>
        <dbReference type="ChEBI" id="CHEBI:29105"/>
    </ligand>
</feature>
<feature type="binding site" evidence="1">
    <location>
        <position position="241"/>
    </location>
    <ligand>
        <name>Zn(2+)</name>
        <dbReference type="ChEBI" id="CHEBI:29105"/>
    </ligand>
</feature>
<feature type="binding site" evidence="1">
    <location>
        <position position="245"/>
    </location>
    <ligand>
        <name>Zn(2+)</name>
        <dbReference type="ChEBI" id="CHEBI:29105"/>
    </ligand>
</feature>
<proteinExistence type="inferred from homology"/>
<comment type="function">
    <text evidence="1">Catalyzes the hydrolysis of UDP-3-O-myristoyl-N-acetylglucosamine to form UDP-3-O-myristoylglucosamine and acetate, the committed step in lipid A biosynthesis.</text>
</comment>
<comment type="catalytic activity">
    <reaction evidence="1">
        <text>a UDP-3-O-[(3R)-3-hydroxyacyl]-N-acetyl-alpha-D-glucosamine + H2O = a UDP-3-O-[(3R)-3-hydroxyacyl]-alpha-D-glucosamine + acetate</text>
        <dbReference type="Rhea" id="RHEA:67816"/>
        <dbReference type="ChEBI" id="CHEBI:15377"/>
        <dbReference type="ChEBI" id="CHEBI:30089"/>
        <dbReference type="ChEBI" id="CHEBI:137740"/>
        <dbReference type="ChEBI" id="CHEBI:173225"/>
        <dbReference type="EC" id="3.5.1.108"/>
    </reaction>
</comment>
<comment type="cofactor">
    <cofactor evidence="1">
        <name>Zn(2+)</name>
        <dbReference type="ChEBI" id="CHEBI:29105"/>
    </cofactor>
</comment>
<comment type="pathway">
    <text evidence="1">Glycolipid biosynthesis; lipid IV(A) biosynthesis; lipid IV(A) from (3R)-3-hydroxytetradecanoyl-[acyl-carrier-protein] and UDP-N-acetyl-alpha-D-glucosamine: step 2/6.</text>
</comment>
<comment type="similarity">
    <text evidence="1">Belongs to the LpxC family.</text>
</comment>
<protein>
    <recommendedName>
        <fullName evidence="1">UDP-3-O-acyl-N-acetylglucosamine deacetylase</fullName>
        <shortName evidence="1">UDP-3-O-acyl-GlcNAc deacetylase</shortName>
        <ecNumber evidence="1">3.5.1.108</ecNumber>
    </recommendedName>
    <alternativeName>
        <fullName evidence="1">UDP-3-O-[R-3-hydroxymyristoyl]-N-acetylglucosamine deacetylase</fullName>
    </alternativeName>
</protein>
<gene>
    <name evidence="1" type="primary">lpxC</name>
    <name type="ordered locus">BB4192</name>
</gene>
<reference key="1">
    <citation type="journal article" date="2003" name="Nat. Genet.">
        <title>Comparative analysis of the genome sequences of Bordetella pertussis, Bordetella parapertussis and Bordetella bronchiseptica.</title>
        <authorList>
            <person name="Parkhill J."/>
            <person name="Sebaihia M."/>
            <person name="Preston A."/>
            <person name="Murphy L.D."/>
            <person name="Thomson N.R."/>
            <person name="Harris D.E."/>
            <person name="Holden M.T.G."/>
            <person name="Churcher C.M."/>
            <person name="Bentley S.D."/>
            <person name="Mungall K.L."/>
            <person name="Cerdeno-Tarraga A.-M."/>
            <person name="Temple L."/>
            <person name="James K.D."/>
            <person name="Harris B."/>
            <person name="Quail M.A."/>
            <person name="Achtman M."/>
            <person name="Atkin R."/>
            <person name="Baker S."/>
            <person name="Basham D."/>
            <person name="Bason N."/>
            <person name="Cherevach I."/>
            <person name="Chillingworth T."/>
            <person name="Collins M."/>
            <person name="Cronin A."/>
            <person name="Davis P."/>
            <person name="Doggett J."/>
            <person name="Feltwell T."/>
            <person name="Goble A."/>
            <person name="Hamlin N."/>
            <person name="Hauser H."/>
            <person name="Holroyd S."/>
            <person name="Jagels K."/>
            <person name="Leather S."/>
            <person name="Moule S."/>
            <person name="Norberczak H."/>
            <person name="O'Neil S."/>
            <person name="Ormond D."/>
            <person name="Price C."/>
            <person name="Rabbinowitsch E."/>
            <person name="Rutter S."/>
            <person name="Sanders M."/>
            <person name="Saunders D."/>
            <person name="Seeger K."/>
            <person name="Sharp S."/>
            <person name="Simmonds M."/>
            <person name="Skelton J."/>
            <person name="Squares R."/>
            <person name="Squares S."/>
            <person name="Stevens K."/>
            <person name="Unwin L."/>
            <person name="Whitehead S."/>
            <person name="Barrell B.G."/>
            <person name="Maskell D.J."/>
        </authorList>
    </citation>
    <scope>NUCLEOTIDE SEQUENCE [LARGE SCALE GENOMIC DNA]</scope>
    <source>
        <strain>ATCC BAA-588 / NCTC 13252 / RB50</strain>
    </source>
</reference>
<sequence length="307" mass="34156">MFRQRSIQNLVRTIGVGVHSGRRVELTLRPAEANTGIVFHRVDLPQVVDLPASAIGVGDTRMASVLQQGNVRVSTVEHLMSALAGLGIDNLHVDLTAEEVPIMDGSAATFVYLLRSAGIVEQNAPKRFIRVLKPIEVREGEGRNEKWARLEPHEGFALAFSIDFRHPAIDSTANFAEIDFATHSYVREIARARTFGFVNEVEALRSMGLARGGSLDNAIVMDEFRVLNSDGLRYDDEFVKHKILDAIGDLYLLGKPLVARYVAYKSGHALNNQLARALLEQQDAWELVTYESQAEAPQAFRHEWKLA</sequence>
<evidence type="ECO:0000255" key="1">
    <source>
        <dbReference type="HAMAP-Rule" id="MF_00388"/>
    </source>
</evidence>
<keyword id="KW-0378">Hydrolase</keyword>
<keyword id="KW-0441">Lipid A biosynthesis</keyword>
<keyword id="KW-0444">Lipid biosynthesis</keyword>
<keyword id="KW-0443">Lipid metabolism</keyword>
<keyword id="KW-0479">Metal-binding</keyword>
<keyword id="KW-0862">Zinc</keyword>
<dbReference type="EC" id="3.5.1.108" evidence="1"/>
<dbReference type="EMBL" id="BX640449">
    <property type="protein sequence ID" value="CAE34556.1"/>
    <property type="molecule type" value="Genomic_DNA"/>
</dbReference>
<dbReference type="RefSeq" id="WP_003814567.1">
    <property type="nucleotide sequence ID" value="NC_002927.3"/>
</dbReference>
<dbReference type="SMR" id="Q7WFS8"/>
<dbReference type="GeneID" id="93205535"/>
<dbReference type="KEGG" id="bbr:BB4192"/>
<dbReference type="eggNOG" id="COG0774">
    <property type="taxonomic scope" value="Bacteria"/>
</dbReference>
<dbReference type="HOGENOM" id="CLU_046528_1_0_4"/>
<dbReference type="UniPathway" id="UPA00359">
    <property type="reaction ID" value="UER00478"/>
</dbReference>
<dbReference type="Proteomes" id="UP000001027">
    <property type="component" value="Chromosome"/>
</dbReference>
<dbReference type="GO" id="GO:0016020">
    <property type="term" value="C:membrane"/>
    <property type="evidence" value="ECO:0007669"/>
    <property type="project" value="GOC"/>
</dbReference>
<dbReference type="GO" id="GO:0046872">
    <property type="term" value="F:metal ion binding"/>
    <property type="evidence" value="ECO:0007669"/>
    <property type="project" value="UniProtKB-KW"/>
</dbReference>
<dbReference type="GO" id="GO:0103117">
    <property type="term" value="F:UDP-3-O-acyl-N-acetylglucosamine deacetylase activity"/>
    <property type="evidence" value="ECO:0007669"/>
    <property type="project" value="UniProtKB-UniRule"/>
</dbReference>
<dbReference type="GO" id="GO:0009245">
    <property type="term" value="P:lipid A biosynthetic process"/>
    <property type="evidence" value="ECO:0007669"/>
    <property type="project" value="UniProtKB-UniRule"/>
</dbReference>
<dbReference type="Gene3D" id="3.30.230.20">
    <property type="entry name" value="lpxc deacetylase, domain 1"/>
    <property type="match status" value="1"/>
</dbReference>
<dbReference type="Gene3D" id="3.30.1700.10">
    <property type="entry name" value="lpxc deacetylase, domain 2"/>
    <property type="match status" value="1"/>
</dbReference>
<dbReference type="HAMAP" id="MF_00388">
    <property type="entry name" value="LpxC"/>
    <property type="match status" value="1"/>
</dbReference>
<dbReference type="InterPro" id="IPR020568">
    <property type="entry name" value="Ribosomal_Su5_D2-typ_SF"/>
</dbReference>
<dbReference type="InterPro" id="IPR004463">
    <property type="entry name" value="UDP-acyl_GlcNac_deAcase"/>
</dbReference>
<dbReference type="InterPro" id="IPR011334">
    <property type="entry name" value="UDP-acyl_GlcNac_deAcase_C"/>
</dbReference>
<dbReference type="InterPro" id="IPR015870">
    <property type="entry name" value="UDP-acyl_N-AcGlcN_deAcase_N"/>
</dbReference>
<dbReference type="NCBIfam" id="TIGR00325">
    <property type="entry name" value="lpxC"/>
    <property type="match status" value="1"/>
</dbReference>
<dbReference type="PANTHER" id="PTHR33694">
    <property type="entry name" value="UDP-3-O-ACYL-N-ACETYLGLUCOSAMINE DEACETYLASE 1, MITOCHONDRIAL-RELATED"/>
    <property type="match status" value="1"/>
</dbReference>
<dbReference type="PANTHER" id="PTHR33694:SF1">
    <property type="entry name" value="UDP-3-O-ACYL-N-ACETYLGLUCOSAMINE DEACETYLASE 1, MITOCHONDRIAL-RELATED"/>
    <property type="match status" value="1"/>
</dbReference>
<dbReference type="Pfam" id="PF03331">
    <property type="entry name" value="LpxC"/>
    <property type="match status" value="1"/>
</dbReference>
<dbReference type="SUPFAM" id="SSF54211">
    <property type="entry name" value="Ribosomal protein S5 domain 2-like"/>
    <property type="match status" value="2"/>
</dbReference>
<name>LPXC_BORBR</name>
<organism>
    <name type="scientific">Bordetella bronchiseptica (strain ATCC BAA-588 / NCTC 13252 / RB50)</name>
    <name type="common">Alcaligenes bronchisepticus</name>
    <dbReference type="NCBI Taxonomy" id="257310"/>
    <lineage>
        <taxon>Bacteria</taxon>
        <taxon>Pseudomonadati</taxon>
        <taxon>Pseudomonadota</taxon>
        <taxon>Betaproteobacteria</taxon>
        <taxon>Burkholderiales</taxon>
        <taxon>Alcaligenaceae</taxon>
        <taxon>Bordetella</taxon>
    </lineage>
</organism>